<accession>Q0G9S7</accession>
<feature type="chain" id="PRO_0000275390" description="Translation initiation factor IF-1, chloroplastic">
    <location>
        <begin position="1"/>
        <end position="77"/>
    </location>
</feature>
<feature type="domain" description="S1-like" evidence="1">
    <location>
        <begin position="1"/>
        <end position="71"/>
    </location>
</feature>
<gene>
    <name evidence="1" type="primary">infA</name>
</gene>
<name>IF1C_DAUCA</name>
<evidence type="ECO:0000255" key="1">
    <source>
        <dbReference type="HAMAP-Rule" id="MF_00075"/>
    </source>
</evidence>
<geneLocation type="chloroplast"/>
<keyword id="KW-0150">Chloroplast</keyword>
<keyword id="KW-0396">Initiation factor</keyword>
<keyword id="KW-0934">Plastid</keyword>
<keyword id="KW-0648">Protein biosynthesis</keyword>
<keyword id="KW-0694">RNA-binding</keyword>
<keyword id="KW-0699">rRNA-binding</keyword>
<dbReference type="EMBL" id="DQ898156">
    <property type="protein sequence ID" value="ABI32458.1"/>
    <property type="molecule type" value="Genomic_DNA"/>
</dbReference>
<dbReference type="RefSeq" id="YP_740152.1">
    <property type="nucleotide sequence ID" value="NC_008325.1"/>
</dbReference>
<dbReference type="SMR" id="Q0G9S7"/>
<dbReference type="GeneID" id="4266779"/>
<dbReference type="OMA" id="EGHQCLC"/>
<dbReference type="GO" id="GO:0009507">
    <property type="term" value="C:chloroplast"/>
    <property type="evidence" value="ECO:0007669"/>
    <property type="project" value="UniProtKB-SubCell"/>
</dbReference>
<dbReference type="GO" id="GO:0005829">
    <property type="term" value="C:cytosol"/>
    <property type="evidence" value="ECO:0007669"/>
    <property type="project" value="TreeGrafter"/>
</dbReference>
<dbReference type="GO" id="GO:0043022">
    <property type="term" value="F:ribosome binding"/>
    <property type="evidence" value="ECO:0007669"/>
    <property type="project" value="UniProtKB-UniRule"/>
</dbReference>
<dbReference type="GO" id="GO:0019843">
    <property type="term" value="F:rRNA binding"/>
    <property type="evidence" value="ECO:0007669"/>
    <property type="project" value="UniProtKB-UniRule"/>
</dbReference>
<dbReference type="GO" id="GO:0003743">
    <property type="term" value="F:translation initiation factor activity"/>
    <property type="evidence" value="ECO:0007669"/>
    <property type="project" value="UniProtKB-UniRule"/>
</dbReference>
<dbReference type="CDD" id="cd04451">
    <property type="entry name" value="S1_IF1"/>
    <property type="match status" value="1"/>
</dbReference>
<dbReference type="FunFam" id="2.40.50.140:FF:000019">
    <property type="entry name" value="Translation initiation factor IF-1, chloroplastic"/>
    <property type="match status" value="1"/>
</dbReference>
<dbReference type="Gene3D" id="2.40.50.140">
    <property type="entry name" value="Nucleic acid-binding proteins"/>
    <property type="match status" value="1"/>
</dbReference>
<dbReference type="HAMAP" id="MF_00075">
    <property type="entry name" value="IF_1"/>
    <property type="match status" value="1"/>
</dbReference>
<dbReference type="InterPro" id="IPR012340">
    <property type="entry name" value="NA-bd_OB-fold"/>
</dbReference>
<dbReference type="InterPro" id="IPR006196">
    <property type="entry name" value="RNA-binding_domain_S1_IF1"/>
</dbReference>
<dbReference type="InterPro" id="IPR003029">
    <property type="entry name" value="S1_domain"/>
</dbReference>
<dbReference type="InterPro" id="IPR004368">
    <property type="entry name" value="TIF_IF1"/>
</dbReference>
<dbReference type="NCBIfam" id="TIGR00008">
    <property type="entry name" value="infA"/>
    <property type="match status" value="1"/>
</dbReference>
<dbReference type="PANTHER" id="PTHR33370">
    <property type="entry name" value="TRANSLATION INITIATION FACTOR IF-1, CHLOROPLASTIC"/>
    <property type="match status" value="1"/>
</dbReference>
<dbReference type="PANTHER" id="PTHR33370:SF1">
    <property type="entry name" value="TRANSLATION INITIATION FACTOR IF-1, CHLOROPLASTIC"/>
    <property type="match status" value="1"/>
</dbReference>
<dbReference type="Pfam" id="PF01176">
    <property type="entry name" value="eIF-1a"/>
    <property type="match status" value="1"/>
</dbReference>
<dbReference type="SMART" id="SM00316">
    <property type="entry name" value="S1"/>
    <property type="match status" value="1"/>
</dbReference>
<dbReference type="SUPFAM" id="SSF50249">
    <property type="entry name" value="Nucleic acid-binding proteins"/>
    <property type="match status" value="1"/>
</dbReference>
<dbReference type="PROSITE" id="PS50832">
    <property type="entry name" value="S1_IF1_TYPE"/>
    <property type="match status" value="1"/>
</dbReference>
<reference key="1">
    <citation type="journal article" date="2006" name="BMC Genomics">
        <title>Complete plastid genome sequence of Daucus carota: implications for biotechnology and phylogeny of angiosperms.</title>
        <authorList>
            <person name="Ruhlman T."/>
            <person name="Lee S.-B."/>
            <person name="Jansen R.K."/>
            <person name="Hostetler J.B."/>
            <person name="Tallon L.J."/>
            <person name="Town C.D."/>
            <person name="Daniell H."/>
        </authorList>
    </citation>
    <scope>NUCLEOTIDE SEQUENCE [LARGE SCALE GENOMIC DNA]</scope>
    <source>
        <strain>cv. Danvers Half-long</strain>
    </source>
</reference>
<protein>
    <recommendedName>
        <fullName evidence="1">Translation initiation factor IF-1, chloroplastic</fullName>
    </recommendedName>
</protein>
<organism>
    <name type="scientific">Daucus carota</name>
    <name type="common">Wild carrot</name>
    <dbReference type="NCBI Taxonomy" id="4039"/>
    <lineage>
        <taxon>Eukaryota</taxon>
        <taxon>Viridiplantae</taxon>
        <taxon>Streptophyta</taxon>
        <taxon>Embryophyta</taxon>
        <taxon>Tracheophyta</taxon>
        <taxon>Spermatophyta</taxon>
        <taxon>Magnoliopsida</taxon>
        <taxon>eudicotyledons</taxon>
        <taxon>Gunneridae</taxon>
        <taxon>Pentapetalae</taxon>
        <taxon>asterids</taxon>
        <taxon>campanulids</taxon>
        <taxon>Apiales</taxon>
        <taxon>Apiaceae</taxon>
        <taxon>Apioideae</taxon>
        <taxon>Scandiceae</taxon>
        <taxon>Daucinae</taxon>
        <taxon>Daucus</taxon>
        <taxon>Daucus sect. Daucus</taxon>
    </lineage>
</organism>
<sequence>MKEQKWIHEGLITESLPNGMFRIRLDNQDMILGYVSGKIRRSFIRILPGDRVKIEVSRYDSTRGRIIYRLRNKDSKD</sequence>
<comment type="function">
    <text evidence="1">One of the essential components for the initiation of protein synthesis. Stabilizes the binding of IF-2 and IF-3 on the 30S subunit to which N-formylmethionyl-tRNA(fMet) subsequently binds. Helps modulate mRNA selection, yielding the 30S pre-initiation complex (PIC). Upon addition of the 50S ribosomal subunit IF-1, IF-2 and IF-3 are released leaving the mature 70S translation initiation complex.</text>
</comment>
<comment type="subunit">
    <text evidence="1">Component of the 30S ribosomal translation pre-initiation complex which assembles on the 30S ribosome in the order IF-2 and IF-3, IF-1 and N-formylmethionyl-tRNA(fMet); mRNA recruitment can occur at any time during PIC assembly.</text>
</comment>
<comment type="subcellular location">
    <subcellularLocation>
        <location evidence="1">Plastid</location>
        <location evidence="1">Chloroplast</location>
    </subcellularLocation>
</comment>
<comment type="similarity">
    <text evidence="1">Belongs to the IF-1 family.</text>
</comment>
<proteinExistence type="inferred from homology"/>